<evidence type="ECO:0000255" key="1">
    <source>
        <dbReference type="HAMAP-Rule" id="MF_00409"/>
    </source>
</evidence>
<comment type="function">
    <text evidence="1">Transfers the gamma-phosphate of ATP to the 4'-position of a tetraacyldisaccharide 1-phosphate intermediate (termed DS-1-P) to form tetraacyldisaccharide 1,4'-bis-phosphate (lipid IVA).</text>
</comment>
<comment type="catalytic activity">
    <reaction evidence="1">
        <text>a lipid A disaccharide + ATP = a lipid IVA + ADP + H(+)</text>
        <dbReference type="Rhea" id="RHEA:67840"/>
        <dbReference type="ChEBI" id="CHEBI:15378"/>
        <dbReference type="ChEBI" id="CHEBI:30616"/>
        <dbReference type="ChEBI" id="CHEBI:176343"/>
        <dbReference type="ChEBI" id="CHEBI:176425"/>
        <dbReference type="ChEBI" id="CHEBI:456216"/>
        <dbReference type="EC" id="2.7.1.130"/>
    </reaction>
</comment>
<comment type="pathway">
    <text evidence="1">Glycolipid biosynthesis; lipid IV(A) biosynthesis; lipid IV(A) from (3R)-3-hydroxytetradecanoyl-[acyl-carrier-protein] and UDP-N-acetyl-alpha-D-glucosamine: step 6/6.</text>
</comment>
<comment type="similarity">
    <text evidence="1">Belongs to the LpxK family.</text>
</comment>
<organism>
    <name type="scientific">Helicobacter pylori (strain J99 / ATCC 700824)</name>
    <name type="common">Campylobacter pylori J99</name>
    <dbReference type="NCBI Taxonomy" id="85963"/>
    <lineage>
        <taxon>Bacteria</taxon>
        <taxon>Pseudomonadati</taxon>
        <taxon>Campylobacterota</taxon>
        <taxon>Epsilonproteobacteria</taxon>
        <taxon>Campylobacterales</taxon>
        <taxon>Helicobacteraceae</taxon>
        <taxon>Helicobacter</taxon>
    </lineage>
</organism>
<proteinExistence type="inferred from homology"/>
<gene>
    <name evidence="1" type="primary">lpxK</name>
    <name type="ordered locus">jhp_0311</name>
</gene>
<name>LPXK_HELPJ</name>
<protein>
    <recommendedName>
        <fullName evidence="1">Tetraacyldisaccharide 4'-kinase</fullName>
        <ecNumber evidence="1">2.7.1.130</ecNumber>
    </recommendedName>
    <alternativeName>
        <fullName evidence="1">Lipid A 4'-kinase</fullName>
    </alternativeName>
</protein>
<feature type="chain" id="PRO_0000190931" description="Tetraacyldisaccharide 4'-kinase">
    <location>
        <begin position="1"/>
        <end position="312"/>
    </location>
</feature>
<feature type="binding site" evidence="1">
    <location>
        <begin position="60"/>
        <end position="67"/>
    </location>
    <ligand>
        <name>ATP</name>
        <dbReference type="ChEBI" id="CHEBI:30616"/>
    </ligand>
</feature>
<sequence>MKSDKPFLERYFYDPTLLQKGLIFALYPFSLIYQCIATIKRKTAKKHDFKIPIISIGNLIAGGSGKTPFILEIAPRYQEVAVVSRGYQRDSKGLVVVSVKGNILVPQKTAGDEAYLLALNLKQASVIVSEKRELGVLKALELGSKIVFLDDGFRFNFNQFNALLKPKVPPYYPFCLPSGLYRENIKSYKEAHLVITEDKDYQRITSITNPTKRMLLVTAIANPSRLDAFLPKEVVKKLYFRDHAPFDLKLLEKEFYQNNATSLLVTSKDLVKLQDCKLPLSVLDLKLEICPKVLEEIDRYILSYPCNIKEHL</sequence>
<dbReference type="EC" id="2.7.1.130" evidence="1"/>
<dbReference type="EMBL" id="AE001439">
    <property type="protein sequence ID" value="AAD05884.1"/>
    <property type="molecule type" value="Genomic_DNA"/>
</dbReference>
<dbReference type="PIR" id="H71948">
    <property type="entry name" value="H71948"/>
</dbReference>
<dbReference type="RefSeq" id="WP_000833880.1">
    <property type="nucleotide sequence ID" value="NC_000921.1"/>
</dbReference>
<dbReference type="SMR" id="Q9ZMB1"/>
<dbReference type="KEGG" id="hpj:jhp_0311"/>
<dbReference type="PATRIC" id="fig|85963.30.peg.702"/>
<dbReference type="eggNOG" id="COG1663">
    <property type="taxonomic scope" value="Bacteria"/>
</dbReference>
<dbReference type="UniPathway" id="UPA00359">
    <property type="reaction ID" value="UER00482"/>
</dbReference>
<dbReference type="Proteomes" id="UP000000804">
    <property type="component" value="Chromosome"/>
</dbReference>
<dbReference type="GO" id="GO:0005886">
    <property type="term" value="C:plasma membrane"/>
    <property type="evidence" value="ECO:0007669"/>
    <property type="project" value="TreeGrafter"/>
</dbReference>
<dbReference type="GO" id="GO:0005524">
    <property type="term" value="F:ATP binding"/>
    <property type="evidence" value="ECO:0007669"/>
    <property type="project" value="UniProtKB-UniRule"/>
</dbReference>
<dbReference type="GO" id="GO:0009029">
    <property type="term" value="F:tetraacyldisaccharide 4'-kinase activity"/>
    <property type="evidence" value="ECO:0007669"/>
    <property type="project" value="UniProtKB-UniRule"/>
</dbReference>
<dbReference type="GO" id="GO:0009245">
    <property type="term" value="P:lipid A biosynthetic process"/>
    <property type="evidence" value="ECO:0007669"/>
    <property type="project" value="UniProtKB-UniRule"/>
</dbReference>
<dbReference type="GO" id="GO:0009244">
    <property type="term" value="P:lipopolysaccharide core region biosynthetic process"/>
    <property type="evidence" value="ECO:0007669"/>
    <property type="project" value="TreeGrafter"/>
</dbReference>
<dbReference type="HAMAP" id="MF_00409">
    <property type="entry name" value="LpxK"/>
    <property type="match status" value="1"/>
</dbReference>
<dbReference type="InterPro" id="IPR003758">
    <property type="entry name" value="LpxK"/>
</dbReference>
<dbReference type="NCBIfam" id="NF001892">
    <property type="entry name" value="PRK00652.1-5"/>
    <property type="match status" value="1"/>
</dbReference>
<dbReference type="PANTHER" id="PTHR42724">
    <property type="entry name" value="TETRAACYLDISACCHARIDE 4'-KINASE"/>
    <property type="match status" value="1"/>
</dbReference>
<dbReference type="PANTHER" id="PTHR42724:SF1">
    <property type="entry name" value="TETRAACYLDISACCHARIDE 4'-KINASE, MITOCHONDRIAL-RELATED"/>
    <property type="match status" value="1"/>
</dbReference>
<dbReference type="Pfam" id="PF02606">
    <property type="entry name" value="LpxK"/>
    <property type="match status" value="1"/>
</dbReference>
<keyword id="KW-0067">ATP-binding</keyword>
<keyword id="KW-0418">Kinase</keyword>
<keyword id="KW-0441">Lipid A biosynthesis</keyword>
<keyword id="KW-0444">Lipid biosynthesis</keyword>
<keyword id="KW-0443">Lipid metabolism</keyword>
<keyword id="KW-0547">Nucleotide-binding</keyword>
<keyword id="KW-0808">Transferase</keyword>
<reference key="1">
    <citation type="journal article" date="1999" name="Nature">
        <title>Genomic sequence comparison of two unrelated isolates of the human gastric pathogen Helicobacter pylori.</title>
        <authorList>
            <person name="Alm R.A."/>
            <person name="Ling L.-S.L."/>
            <person name="Moir D.T."/>
            <person name="King B.L."/>
            <person name="Brown E.D."/>
            <person name="Doig P.C."/>
            <person name="Smith D.R."/>
            <person name="Noonan B."/>
            <person name="Guild B.C."/>
            <person name="deJonge B.L."/>
            <person name="Carmel G."/>
            <person name="Tummino P.J."/>
            <person name="Caruso A."/>
            <person name="Uria-Nickelsen M."/>
            <person name="Mills D.M."/>
            <person name="Ives C."/>
            <person name="Gibson R."/>
            <person name="Merberg D."/>
            <person name="Mills S.D."/>
            <person name="Jiang Q."/>
            <person name="Taylor D.E."/>
            <person name="Vovis G.F."/>
            <person name="Trust T.J."/>
        </authorList>
    </citation>
    <scope>NUCLEOTIDE SEQUENCE [LARGE SCALE GENOMIC DNA]</scope>
    <source>
        <strain>J99 / ATCC 700824</strain>
    </source>
</reference>
<accession>Q9ZMB1</accession>